<reference key="1">
    <citation type="journal article" date="2009" name="BMC Genomics">
        <title>Complete genome sequence of the sugarcane nitrogen-fixing endophyte Gluconacetobacter diazotrophicus Pal5.</title>
        <authorList>
            <person name="Bertalan M."/>
            <person name="Albano R."/>
            <person name="de Padua V."/>
            <person name="Rouws L."/>
            <person name="Rojas C."/>
            <person name="Hemerly A."/>
            <person name="Teixeira K."/>
            <person name="Schwab S."/>
            <person name="Araujo J."/>
            <person name="Oliveira A."/>
            <person name="Franca L."/>
            <person name="Magalhaes V."/>
            <person name="Alqueres S."/>
            <person name="Cardoso A."/>
            <person name="Almeida W."/>
            <person name="Loureiro M.M."/>
            <person name="Nogueira E."/>
            <person name="Cidade D."/>
            <person name="Oliveira D."/>
            <person name="Simao T."/>
            <person name="Macedo J."/>
            <person name="Valadao A."/>
            <person name="Dreschsel M."/>
            <person name="Freitas F."/>
            <person name="Vidal M."/>
            <person name="Guedes H."/>
            <person name="Rodrigues E."/>
            <person name="Meneses C."/>
            <person name="Brioso P."/>
            <person name="Pozzer L."/>
            <person name="Figueiredo D."/>
            <person name="Montano H."/>
            <person name="Junior J."/>
            <person name="de Souza Filho G."/>
            <person name="Martin Quintana Flores V."/>
            <person name="Ferreira B."/>
            <person name="Branco A."/>
            <person name="Gonzalez P."/>
            <person name="Guillobel H."/>
            <person name="Lemos M."/>
            <person name="Seibel L."/>
            <person name="Macedo J."/>
            <person name="Alves-Ferreira M."/>
            <person name="Sachetto-Martins G."/>
            <person name="Coelho A."/>
            <person name="Santos E."/>
            <person name="Amaral G."/>
            <person name="Neves A."/>
            <person name="Pacheco A.B."/>
            <person name="Carvalho D."/>
            <person name="Lery L."/>
            <person name="Bisch P."/>
            <person name="Rossle S.C."/>
            <person name="Urmenyi T."/>
            <person name="Rael Pereira A."/>
            <person name="Silva R."/>
            <person name="Rondinelli E."/>
            <person name="von Kruger W."/>
            <person name="Martins O."/>
            <person name="Baldani J.I."/>
            <person name="Ferreira P.C."/>
        </authorList>
    </citation>
    <scope>NUCLEOTIDE SEQUENCE [LARGE SCALE GENOMIC DNA]</scope>
    <source>
        <strain>ATCC 49037 / DSM 5601 / CCUG 37298 / CIP 103539 / LMG 7603 / PAl5</strain>
    </source>
</reference>
<reference key="2">
    <citation type="journal article" date="2010" name="Stand. Genomic Sci.">
        <title>Two genome sequences of the same bacterial strain, Gluconacetobacter diazotrophicus PAl 5, suggest a new standard in genome sequence submission.</title>
        <authorList>
            <person name="Giongo A."/>
            <person name="Tyler H.L."/>
            <person name="Zipperer U.N."/>
            <person name="Triplett E.W."/>
        </authorList>
    </citation>
    <scope>NUCLEOTIDE SEQUENCE [LARGE SCALE GENOMIC DNA]</scope>
    <source>
        <strain>ATCC 49037 / DSM 5601 / CCUG 37298 / CIP 103539 / LMG 7603 / PAl5</strain>
    </source>
</reference>
<gene>
    <name evidence="1" type="primary">mnmA</name>
    <name type="ordered locus">GDI2369</name>
    <name type="ordered locus">Gdia_0614</name>
</gene>
<dbReference type="EC" id="2.8.1.13" evidence="1"/>
<dbReference type="EMBL" id="AM889285">
    <property type="protein sequence ID" value="CAP56312.1"/>
    <property type="molecule type" value="Genomic_DNA"/>
</dbReference>
<dbReference type="EMBL" id="CP001189">
    <property type="protein sequence ID" value="ACI50406.1"/>
    <property type="molecule type" value="Genomic_DNA"/>
</dbReference>
<dbReference type="RefSeq" id="WP_012226311.1">
    <property type="nucleotide sequence ID" value="NC_010125.1"/>
</dbReference>
<dbReference type="RefSeq" id="WP_012553242.1">
    <property type="nucleotide sequence ID" value="NC_011365.1"/>
</dbReference>
<dbReference type="SMR" id="A9HMI3"/>
<dbReference type="STRING" id="272568.GDI2369"/>
<dbReference type="KEGG" id="gdi:GDI2369"/>
<dbReference type="KEGG" id="gdj:Gdia_0614"/>
<dbReference type="eggNOG" id="COG0482">
    <property type="taxonomic scope" value="Bacteria"/>
</dbReference>
<dbReference type="HOGENOM" id="CLU_035188_0_1_5"/>
<dbReference type="OrthoDB" id="9800696at2"/>
<dbReference type="Proteomes" id="UP000001176">
    <property type="component" value="Chromosome"/>
</dbReference>
<dbReference type="GO" id="GO:0005737">
    <property type="term" value="C:cytoplasm"/>
    <property type="evidence" value="ECO:0007669"/>
    <property type="project" value="UniProtKB-SubCell"/>
</dbReference>
<dbReference type="GO" id="GO:0005524">
    <property type="term" value="F:ATP binding"/>
    <property type="evidence" value="ECO:0007669"/>
    <property type="project" value="UniProtKB-KW"/>
</dbReference>
<dbReference type="GO" id="GO:0000049">
    <property type="term" value="F:tRNA binding"/>
    <property type="evidence" value="ECO:0007669"/>
    <property type="project" value="UniProtKB-KW"/>
</dbReference>
<dbReference type="GO" id="GO:0103016">
    <property type="term" value="F:tRNA-uridine 2-sulfurtransferase activity"/>
    <property type="evidence" value="ECO:0007669"/>
    <property type="project" value="UniProtKB-EC"/>
</dbReference>
<dbReference type="GO" id="GO:0002143">
    <property type="term" value="P:tRNA wobble position uridine thiolation"/>
    <property type="evidence" value="ECO:0007669"/>
    <property type="project" value="TreeGrafter"/>
</dbReference>
<dbReference type="CDD" id="cd01998">
    <property type="entry name" value="MnmA_TRMU-like"/>
    <property type="match status" value="1"/>
</dbReference>
<dbReference type="Gene3D" id="2.30.30.280">
    <property type="entry name" value="Adenine nucleotide alpha hydrolases-like domains"/>
    <property type="match status" value="1"/>
</dbReference>
<dbReference type="Gene3D" id="3.40.50.620">
    <property type="entry name" value="HUPs"/>
    <property type="match status" value="1"/>
</dbReference>
<dbReference type="Gene3D" id="2.40.30.10">
    <property type="entry name" value="Translation factors"/>
    <property type="match status" value="1"/>
</dbReference>
<dbReference type="HAMAP" id="MF_00144">
    <property type="entry name" value="tRNA_thiouridyl_MnmA"/>
    <property type="match status" value="1"/>
</dbReference>
<dbReference type="InterPro" id="IPR004506">
    <property type="entry name" value="MnmA-like"/>
</dbReference>
<dbReference type="InterPro" id="IPR046885">
    <property type="entry name" value="MnmA-like_C"/>
</dbReference>
<dbReference type="InterPro" id="IPR046884">
    <property type="entry name" value="MnmA-like_central"/>
</dbReference>
<dbReference type="InterPro" id="IPR023382">
    <property type="entry name" value="MnmA-like_central_sf"/>
</dbReference>
<dbReference type="InterPro" id="IPR014729">
    <property type="entry name" value="Rossmann-like_a/b/a_fold"/>
</dbReference>
<dbReference type="NCBIfam" id="NF001138">
    <property type="entry name" value="PRK00143.1"/>
    <property type="match status" value="1"/>
</dbReference>
<dbReference type="NCBIfam" id="TIGR00420">
    <property type="entry name" value="trmU"/>
    <property type="match status" value="1"/>
</dbReference>
<dbReference type="PANTHER" id="PTHR11933:SF5">
    <property type="entry name" value="MITOCHONDRIAL TRNA-SPECIFIC 2-THIOURIDYLASE 1"/>
    <property type="match status" value="1"/>
</dbReference>
<dbReference type="PANTHER" id="PTHR11933">
    <property type="entry name" value="TRNA 5-METHYLAMINOMETHYL-2-THIOURIDYLATE -METHYLTRANSFERASE"/>
    <property type="match status" value="1"/>
</dbReference>
<dbReference type="Pfam" id="PF03054">
    <property type="entry name" value="tRNA_Me_trans"/>
    <property type="match status" value="1"/>
</dbReference>
<dbReference type="Pfam" id="PF20258">
    <property type="entry name" value="tRNA_Me_trans_C"/>
    <property type="match status" value="1"/>
</dbReference>
<dbReference type="Pfam" id="PF20259">
    <property type="entry name" value="tRNA_Me_trans_M"/>
    <property type="match status" value="1"/>
</dbReference>
<dbReference type="SUPFAM" id="SSF52402">
    <property type="entry name" value="Adenine nucleotide alpha hydrolases-like"/>
    <property type="match status" value="1"/>
</dbReference>
<organism>
    <name type="scientific">Gluconacetobacter diazotrophicus (strain ATCC 49037 / DSM 5601 / CCUG 37298 / CIP 103539 / LMG 7603 / PAl5)</name>
    <dbReference type="NCBI Taxonomy" id="272568"/>
    <lineage>
        <taxon>Bacteria</taxon>
        <taxon>Pseudomonadati</taxon>
        <taxon>Pseudomonadota</taxon>
        <taxon>Alphaproteobacteria</taxon>
        <taxon>Acetobacterales</taxon>
        <taxon>Acetobacteraceae</taxon>
        <taxon>Gluconacetobacter</taxon>
    </lineage>
</organism>
<accession>A9HMI3</accession>
<accession>B5ZDS2</accession>
<comment type="function">
    <text evidence="1">Catalyzes the 2-thiolation of uridine at the wobble position (U34) of tRNA, leading to the formation of s(2)U34.</text>
</comment>
<comment type="catalytic activity">
    <reaction evidence="1">
        <text>S-sulfanyl-L-cysteinyl-[protein] + uridine(34) in tRNA + AH2 + ATP = 2-thiouridine(34) in tRNA + L-cysteinyl-[protein] + A + AMP + diphosphate + H(+)</text>
        <dbReference type="Rhea" id="RHEA:47032"/>
        <dbReference type="Rhea" id="RHEA-COMP:10131"/>
        <dbReference type="Rhea" id="RHEA-COMP:11726"/>
        <dbReference type="Rhea" id="RHEA-COMP:11727"/>
        <dbReference type="Rhea" id="RHEA-COMP:11728"/>
        <dbReference type="ChEBI" id="CHEBI:13193"/>
        <dbReference type="ChEBI" id="CHEBI:15378"/>
        <dbReference type="ChEBI" id="CHEBI:17499"/>
        <dbReference type="ChEBI" id="CHEBI:29950"/>
        <dbReference type="ChEBI" id="CHEBI:30616"/>
        <dbReference type="ChEBI" id="CHEBI:33019"/>
        <dbReference type="ChEBI" id="CHEBI:61963"/>
        <dbReference type="ChEBI" id="CHEBI:65315"/>
        <dbReference type="ChEBI" id="CHEBI:87170"/>
        <dbReference type="ChEBI" id="CHEBI:456215"/>
        <dbReference type="EC" id="2.8.1.13"/>
    </reaction>
</comment>
<comment type="subcellular location">
    <subcellularLocation>
        <location evidence="1">Cytoplasm</location>
    </subcellularLocation>
</comment>
<comment type="similarity">
    <text evidence="1">Belongs to the MnmA/TRMU family.</text>
</comment>
<feature type="chain" id="PRO_0000349650" description="tRNA-specific 2-thiouridylase MnmA">
    <location>
        <begin position="1"/>
        <end position="361"/>
    </location>
</feature>
<feature type="region of interest" description="Interaction with tRNA" evidence="1">
    <location>
        <begin position="145"/>
        <end position="147"/>
    </location>
</feature>
<feature type="active site" description="Nucleophile" evidence="1">
    <location>
        <position position="99"/>
    </location>
</feature>
<feature type="active site" description="Cysteine persulfide intermediate" evidence="1">
    <location>
        <position position="196"/>
    </location>
</feature>
<feature type="binding site" evidence="1">
    <location>
        <begin position="6"/>
        <end position="13"/>
    </location>
    <ligand>
        <name>ATP</name>
        <dbReference type="ChEBI" id="CHEBI:30616"/>
    </ligand>
</feature>
<feature type="binding site" evidence="1">
    <location>
        <position position="32"/>
    </location>
    <ligand>
        <name>ATP</name>
        <dbReference type="ChEBI" id="CHEBI:30616"/>
    </ligand>
</feature>
<feature type="binding site" evidence="1">
    <location>
        <position position="123"/>
    </location>
    <ligand>
        <name>ATP</name>
        <dbReference type="ChEBI" id="CHEBI:30616"/>
    </ligand>
</feature>
<feature type="site" description="Interaction with tRNA" evidence="1">
    <location>
        <position position="124"/>
    </location>
</feature>
<feature type="site" description="Interaction with tRNA" evidence="1">
    <location>
        <position position="335"/>
    </location>
</feature>
<feature type="disulfide bond" description="Alternate" evidence="1">
    <location>
        <begin position="99"/>
        <end position="196"/>
    </location>
</feature>
<feature type="sequence conflict" description="In Ref. 2; ACI50406." evidence="2" ref="2">
    <original>I</original>
    <variation>M</variation>
    <location>
        <position position="111"/>
    </location>
</feature>
<feature type="sequence conflict" description="In Ref. 2; ACI50406." evidence="2" ref="2">
    <original>Q</original>
    <variation>R</variation>
    <location>
        <position position="157"/>
    </location>
</feature>
<keyword id="KW-0067">ATP-binding</keyword>
<keyword id="KW-0963">Cytoplasm</keyword>
<keyword id="KW-1015">Disulfide bond</keyword>
<keyword id="KW-0547">Nucleotide-binding</keyword>
<keyword id="KW-1185">Reference proteome</keyword>
<keyword id="KW-0694">RNA-binding</keyword>
<keyword id="KW-0808">Transferase</keyword>
<keyword id="KW-0819">tRNA processing</keyword>
<keyword id="KW-0820">tRNA-binding</keyword>
<proteinExistence type="inferred from homology"/>
<evidence type="ECO:0000255" key="1">
    <source>
        <dbReference type="HAMAP-Rule" id="MF_00144"/>
    </source>
</evidence>
<evidence type="ECO:0000305" key="2"/>
<name>MNMA_GLUDA</name>
<protein>
    <recommendedName>
        <fullName evidence="1">tRNA-specific 2-thiouridylase MnmA</fullName>
        <ecNumber evidence="1">2.8.1.13</ecNumber>
    </recommendedName>
</protein>
<sequence>MRIMVAMSGGVDSSVVAARLVAEGHEVVGATLQLYDSRESARKGACCAGRDIHDARRVADRLGIPHYVIDAETRFRQSVIETFADAYAGGETPVPCVACNQGVKFTDLLGIARDLGAEAMATGHYVRRIEGPDGAELHRPVDEGRDQSWFLFATTRQQLEFLRFPLGDMPDKAAVRAEAERFGLSVAAKPDSQDLCFVPDGSYARVVEALRPEMAGEGEIVDGSGRVVGRHDGVTRFTVGQSRRLGDAAMRDGARQMVVGIDPASRRVVIGPRTGSAVRDLSLRDMNWLIDPPEGDLRCLVQIRAREAARPATVRRTADGASVTLDEAAMPAPGQACVLYDGSRVLGGGFIRRREMAGAAA</sequence>